<evidence type="ECO:0000255" key="1">
    <source>
        <dbReference type="HAMAP-Rule" id="MF_02220"/>
    </source>
</evidence>
<evidence type="ECO:0000269" key="2">
    <source>
    </source>
</evidence>
<evidence type="ECO:0000303" key="3">
    <source>
    </source>
</evidence>
<evidence type="ECO:0000305" key="4"/>
<comment type="function">
    <text evidence="1">Catalyzes the phosphorylation of D-xylulose to D-xylulose 5-phosphate.</text>
</comment>
<comment type="catalytic activity">
    <reaction evidence="1">
        <text>D-xylulose + ATP = D-xylulose 5-phosphate + ADP + H(+)</text>
        <dbReference type="Rhea" id="RHEA:10964"/>
        <dbReference type="ChEBI" id="CHEBI:15378"/>
        <dbReference type="ChEBI" id="CHEBI:17140"/>
        <dbReference type="ChEBI" id="CHEBI:30616"/>
        <dbReference type="ChEBI" id="CHEBI:57737"/>
        <dbReference type="ChEBI" id="CHEBI:456216"/>
        <dbReference type="EC" id="2.7.1.17"/>
    </reaction>
</comment>
<comment type="induction">
    <text evidence="2">By D-xylose.</text>
</comment>
<comment type="similarity">
    <text evidence="1 4">Belongs to the FGGY kinase family.</text>
</comment>
<dbReference type="EC" id="2.7.1.17" evidence="1"/>
<dbReference type="EMBL" id="AF045552">
    <property type="protein sequence ID" value="AAC95126.1"/>
    <property type="molecule type" value="Genomic_DNA"/>
</dbReference>
<dbReference type="EMBL" id="M84564">
    <property type="status" value="NOT_ANNOTATED_CDS"/>
    <property type="molecule type" value="Genomic_DNA"/>
</dbReference>
<dbReference type="PIR" id="JC1138">
    <property type="entry name" value="JC1138"/>
</dbReference>
<dbReference type="SMR" id="P35850"/>
<dbReference type="GO" id="GO:0005524">
    <property type="term" value="F:ATP binding"/>
    <property type="evidence" value="ECO:0007669"/>
    <property type="project" value="UniProtKB-UniRule"/>
</dbReference>
<dbReference type="GO" id="GO:0004856">
    <property type="term" value="F:D-xylulokinase activity"/>
    <property type="evidence" value="ECO:0007669"/>
    <property type="project" value="UniProtKB-UniRule"/>
</dbReference>
<dbReference type="GO" id="GO:0042732">
    <property type="term" value="P:D-xylose metabolic process"/>
    <property type="evidence" value="ECO:0007669"/>
    <property type="project" value="UniProtKB-KW"/>
</dbReference>
<dbReference type="GO" id="GO:0005998">
    <property type="term" value="P:xylulose catabolic process"/>
    <property type="evidence" value="ECO:0007669"/>
    <property type="project" value="UniProtKB-UniRule"/>
</dbReference>
<dbReference type="CDD" id="cd07808">
    <property type="entry name" value="ASKHA_NBD_FGGY_EcXK-like"/>
    <property type="match status" value="1"/>
</dbReference>
<dbReference type="Gene3D" id="3.30.420.40">
    <property type="match status" value="2"/>
</dbReference>
<dbReference type="HAMAP" id="MF_02220">
    <property type="entry name" value="XylB"/>
    <property type="match status" value="1"/>
</dbReference>
<dbReference type="InterPro" id="IPR043129">
    <property type="entry name" value="ATPase_NBD"/>
</dbReference>
<dbReference type="InterPro" id="IPR000577">
    <property type="entry name" value="Carb_kinase_FGGY"/>
</dbReference>
<dbReference type="InterPro" id="IPR018483">
    <property type="entry name" value="Carb_kinase_FGGY_CS"/>
</dbReference>
<dbReference type="InterPro" id="IPR018485">
    <property type="entry name" value="FGGY_C"/>
</dbReference>
<dbReference type="InterPro" id="IPR050406">
    <property type="entry name" value="FGGY_Carb_Kinase"/>
</dbReference>
<dbReference type="InterPro" id="IPR018484">
    <property type="entry name" value="FGGY_N"/>
</dbReference>
<dbReference type="InterPro" id="IPR006000">
    <property type="entry name" value="Xylulokinase"/>
</dbReference>
<dbReference type="NCBIfam" id="TIGR01312">
    <property type="entry name" value="XylB"/>
    <property type="match status" value="1"/>
</dbReference>
<dbReference type="PANTHER" id="PTHR43095">
    <property type="entry name" value="SUGAR KINASE"/>
    <property type="match status" value="1"/>
</dbReference>
<dbReference type="PANTHER" id="PTHR43095:SF5">
    <property type="entry name" value="XYLULOSE KINASE"/>
    <property type="match status" value="1"/>
</dbReference>
<dbReference type="Pfam" id="PF02782">
    <property type="entry name" value="FGGY_C"/>
    <property type="match status" value="1"/>
</dbReference>
<dbReference type="Pfam" id="PF00370">
    <property type="entry name" value="FGGY_N"/>
    <property type="match status" value="1"/>
</dbReference>
<dbReference type="PIRSF" id="PIRSF000538">
    <property type="entry name" value="GlpK"/>
    <property type="match status" value="1"/>
</dbReference>
<dbReference type="SUPFAM" id="SSF53067">
    <property type="entry name" value="Actin-like ATPase domain"/>
    <property type="match status" value="2"/>
</dbReference>
<dbReference type="PROSITE" id="PS00933">
    <property type="entry name" value="FGGY_KINASES_1"/>
    <property type="match status" value="1"/>
</dbReference>
<dbReference type="PROSITE" id="PS00445">
    <property type="entry name" value="FGGY_KINASES_2"/>
    <property type="match status" value="1"/>
</dbReference>
<gene>
    <name evidence="1 3" type="primary">xylB</name>
</gene>
<organism>
    <name type="scientific">Levilactobacillus brevis</name>
    <name type="common">Lactobacillus brevis</name>
    <dbReference type="NCBI Taxonomy" id="1580"/>
    <lineage>
        <taxon>Bacteria</taxon>
        <taxon>Bacillati</taxon>
        <taxon>Bacillota</taxon>
        <taxon>Bacilli</taxon>
        <taxon>Lactobacillales</taxon>
        <taxon>Lactobacillaceae</taxon>
        <taxon>Levilactobacillus</taxon>
    </lineage>
</organism>
<feature type="chain" id="PRO_0000059552" description="Xylulose kinase">
    <location>
        <begin position="1"/>
        <end position="502"/>
    </location>
</feature>
<feature type="active site" description="Proton acceptor" evidence="1">
    <location>
        <position position="240"/>
    </location>
</feature>
<feature type="binding site" evidence="1">
    <location>
        <begin position="82"/>
        <end position="83"/>
    </location>
    <ligand>
        <name>substrate</name>
    </ligand>
</feature>
<feature type="site" description="Important for activity" evidence="1">
    <location>
        <position position="9"/>
    </location>
</feature>
<reference key="1">
    <citation type="journal article" date="1998" name="Appl. Environ. Microbiol.">
        <title>Molecular cloning and functional expression in Lactobacillus plantarum 80 of xylT, encoding the D-xylose-H+ symporter of Lactobacillus brevis.</title>
        <authorList>
            <person name="Chaillou S."/>
            <person name="Bor Y.-C."/>
            <person name="Batt C.A."/>
            <person name="Postma P.W."/>
            <person name="Pouwels P.H."/>
        </authorList>
    </citation>
    <scope>NUCLEOTIDE SEQUENCE [GENOMIC DNA]</scope>
    <scope>INDUCTION</scope>
</reference>
<reference key="2">
    <citation type="journal article" date="1992" name="Gene">
        <title>Cloning and sequencing the Lactobacillus brevis gene encoding xylose isomerase.</title>
        <authorList>
            <person name="Bor Y.-C."/>
            <person name="Moraes C."/>
            <person name="Lee S.-P."/>
            <person name="Crosby W.L."/>
            <person name="Sinskey A.J."/>
            <person name="Batt C.A."/>
        </authorList>
    </citation>
    <scope>NUCLEOTIDE SEQUENCE [GENOMIC DNA] OF 1-121</scope>
</reference>
<protein>
    <recommendedName>
        <fullName evidence="1 3">Xylulose kinase</fullName>
        <shortName evidence="1">Xylulokinase</shortName>
        <ecNumber evidence="1">2.7.1.17</ecNumber>
    </recommendedName>
</protein>
<name>XYLB_LEVBR</name>
<keyword id="KW-0067">ATP-binding</keyword>
<keyword id="KW-0119">Carbohydrate metabolism</keyword>
<keyword id="KW-0418">Kinase</keyword>
<keyword id="KW-0547">Nucleotide-binding</keyword>
<keyword id="KW-0808">Transferase</keyword>
<keyword id="KW-0859">Xylose metabolism</keyword>
<accession>P35850</accession>
<sequence length="502" mass="55168">MGKYVLGVDLGTSAVKVSALDHSGQIVAQESFDYDLIQKQPGYNEQNPEDWVSGTTVAIVRLILNDHLDASNIEGLSYSGQMHGLVLLDENKKVLRPAILWNDTRSTPQREEIEAKLGDEFVHITRNQPLEGFTLTKLLWVKQNEPDIWAKAKYFVLPKDYVRYRMTGNLAMDYSDATGTVLLDVAKGEWSQKICAALDIPMSMCPPLIKSIDLAGTVTPAYAEFSGLTTDTKVFGGAADNAAGAVGAGILHPNMVLSSIGTSGVVLKYEDNADVNYHGVLQFEDHAIPDKFYSMGVTLAAGYSFTWFKKTFAPAEDFTDVVASAAKSTVGANGLLYTPYIVGERAPYADADIRGSFTGVDGTHQRYDFVRAVLEGIIFSFRDLFDIYEENGGDFDTVVSIGGGAKSPLWLQIQADIFNRKVVSLTNEQGPGMGAAMIAATGLGWFDSLQDCAETFVHFGKAYEPNPDNVKKYEKMHAIYKQVYQQTKTISEQLLDYRRAEL</sequence>
<proteinExistence type="evidence at transcript level"/>